<accession>O51202</accession>
<proteinExistence type="inferred from homology"/>
<keyword id="KW-1005">Bacterial flagellum biogenesis</keyword>
<keyword id="KW-0963">Cytoplasm</keyword>
<keyword id="KW-1185">Reference proteome</keyword>
<keyword id="KW-0678">Repressor</keyword>
<keyword id="KW-0694">RNA-binding</keyword>
<keyword id="KW-0810">Translation regulation</keyword>
<sequence>MLVLSRKANESIKINSDIEVLILEIKKDAVKIAIKAPENIKIFRSEIYEFIIEENKKSLLKDKHNISKIKSLFNHYFKNEN</sequence>
<dbReference type="EMBL" id="AE000783">
    <property type="protein sequence ID" value="AAC66576.1"/>
    <property type="molecule type" value="Genomic_DNA"/>
</dbReference>
<dbReference type="PIR" id="H70122">
    <property type="entry name" value="H70122"/>
</dbReference>
<dbReference type="RefSeq" id="NP_212318.1">
    <property type="nucleotide sequence ID" value="NC_001318.1"/>
</dbReference>
<dbReference type="RefSeq" id="WP_002556782.1">
    <property type="nucleotide sequence ID" value="NC_001318.1"/>
</dbReference>
<dbReference type="SMR" id="O51202"/>
<dbReference type="STRING" id="224326.BB_0184"/>
<dbReference type="PaxDb" id="224326-BB_0184"/>
<dbReference type="EnsemblBacteria" id="AAC66576">
    <property type="protein sequence ID" value="AAC66576"/>
    <property type="gene ID" value="BB_0184"/>
</dbReference>
<dbReference type="GeneID" id="56567611"/>
<dbReference type="KEGG" id="bbu:BB_0184"/>
<dbReference type="PATRIC" id="fig|224326.49.peg.581"/>
<dbReference type="HOGENOM" id="CLU_164837_0_2_12"/>
<dbReference type="OrthoDB" id="9809061at2"/>
<dbReference type="Proteomes" id="UP000001807">
    <property type="component" value="Chromosome"/>
</dbReference>
<dbReference type="GO" id="GO:0005829">
    <property type="term" value="C:cytosol"/>
    <property type="evidence" value="ECO:0007669"/>
    <property type="project" value="TreeGrafter"/>
</dbReference>
<dbReference type="GO" id="GO:0048027">
    <property type="term" value="F:mRNA 5'-UTR binding"/>
    <property type="evidence" value="ECO:0007669"/>
    <property type="project" value="UniProtKB-UniRule"/>
</dbReference>
<dbReference type="GO" id="GO:0044781">
    <property type="term" value="P:bacterial-type flagellum organization"/>
    <property type="evidence" value="ECO:0007669"/>
    <property type="project" value="UniProtKB-KW"/>
</dbReference>
<dbReference type="GO" id="GO:0006402">
    <property type="term" value="P:mRNA catabolic process"/>
    <property type="evidence" value="ECO:0007669"/>
    <property type="project" value="InterPro"/>
</dbReference>
<dbReference type="GO" id="GO:0045947">
    <property type="term" value="P:negative regulation of translational initiation"/>
    <property type="evidence" value="ECO:0007669"/>
    <property type="project" value="UniProtKB-UniRule"/>
</dbReference>
<dbReference type="GO" id="GO:1902208">
    <property type="term" value="P:regulation of bacterial-type flagellum assembly"/>
    <property type="evidence" value="ECO:0007669"/>
    <property type="project" value="UniProtKB-UniRule"/>
</dbReference>
<dbReference type="GO" id="GO:0006109">
    <property type="term" value="P:regulation of carbohydrate metabolic process"/>
    <property type="evidence" value="ECO:0007669"/>
    <property type="project" value="InterPro"/>
</dbReference>
<dbReference type="FunFam" id="2.60.40.4380:FF:000002">
    <property type="entry name" value="Translational regulator CsrA"/>
    <property type="match status" value="1"/>
</dbReference>
<dbReference type="Gene3D" id="2.60.40.4380">
    <property type="entry name" value="Translational regulator CsrA"/>
    <property type="match status" value="1"/>
</dbReference>
<dbReference type="HAMAP" id="MF_00167">
    <property type="entry name" value="CsrA"/>
    <property type="match status" value="1"/>
</dbReference>
<dbReference type="InterPro" id="IPR003751">
    <property type="entry name" value="CsrA"/>
</dbReference>
<dbReference type="InterPro" id="IPR036107">
    <property type="entry name" value="CsrA_sf"/>
</dbReference>
<dbReference type="NCBIfam" id="TIGR00202">
    <property type="entry name" value="csrA"/>
    <property type="match status" value="1"/>
</dbReference>
<dbReference type="NCBIfam" id="NF002469">
    <property type="entry name" value="PRK01712.1"/>
    <property type="match status" value="1"/>
</dbReference>
<dbReference type="PANTHER" id="PTHR34984">
    <property type="entry name" value="CARBON STORAGE REGULATOR"/>
    <property type="match status" value="1"/>
</dbReference>
<dbReference type="PANTHER" id="PTHR34984:SF1">
    <property type="entry name" value="CARBON STORAGE REGULATOR"/>
    <property type="match status" value="1"/>
</dbReference>
<dbReference type="Pfam" id="PF02599">
    <property type="entry name" value="CsrA"/>
    <property type="match status" value="1"/>
</dbReference>
<dbReference type="SUPFAM" id="SSF117130">
    <property type="entry name" value="CsrA-like"/>
    <property type="match status" value="1"/>
</dbReference>
<feature type="chain" id="PRO_0000177050" description="Translational regulator CsrA">
    <location>
        <begin position="1"/>
        <end position="81"/>
    </location>
</feature>
<comment type="function">
    <text evidence="1">A translational regulator that binds mRNA to regulate translation initiation and/or mRNA stability. Usually binds in the 5'-UTR at or near the Shine-Dalgarno sequence preventing ribosome-binding, thus repressing translation. Its main target seems to be the major flagellin gene, while its function is anatagonized by FliW.</text>
</comment>
<comment type="subunit">
    <text evidence="1">Homodimer; the beta-strands of each monomer intercalate to form a hydrophobic core, while the alpha-helices form wings that extend away from the core.</text>
</comment>
<comment type="subcellular location">
    <subcellularLocation>
        <location evidence="1">Cytoplasm</location>
    </subcellularLocation>
</comment>
<comment type="similarity">
    <text evidence="1">Belongs to the CsrA/RsmA family.</text>
</comment>
<organism>
    <name type="scientific">Borreliella burgdorferi (strain ATCC 35210 / DSM 4680 / CIP 102532 / B31)</name>
    <name type="common">Borrelia burgdorferi</name>
    <dbReference type="NCBI Taxonomy" id="224326"/>
    <lineage>
        <taxon>Bacteria</taxon>
        <taxon>Pseudomonadati</taxon>
        <taxon>Spirochaetota</taxon>
        <taxon>Spirochaetia</taxon>
        <taxon>Spirochaetales</taxon>
        <taxon>Borreliaceae</taxon>
        <taxon>Borreliella</taxon>
    </lineage>
</organism>
<evidence type="ECO:0000255" key="1">
    <source>
        <dbReference type="HAMAP-Rule" id="MF_00167"/>
    </source>
</evidence>
<name>CSRA_BORBU</name>
<gene>
    <name evidence="1" type="primary">csrA</name>
    <name type="ordered locus">BB_0184</name>
</gene>
<reference key="1">
    <citation type="journal article" date="1997" name="Nature">
        <title>Genomic sequence of a Lyme disease spirochaete, Borrelia burgdorferi.</title>
        <authorList>
            <person name="Fraser C.M."/>
            <person name="Casjens S."/>
            <person name="Huang W.M."/>
            <person name="Sutton G.G."/>
            <person name="Clayton R.A."/>
            <person name="Lathigra R."/>
            <person name="White O."/>
            <person name="Ketchum K.A."/>
            <person name="Dodson R.J."/>
            <person name="Hickey E.K."/>
            <person name="Gwinn M.L."/>
            <person name="Dougherty B.A."/>
            <person name="Tomb J.-F."/>
            <person name="Fleischmann R.D."/>
            <person name="Richardson D.L."/>
            <person name="Peterson J.D."/>
            <person name="Kerlavage A.R."/>
            <person name="Quackenbush J."/>
            <person name="Salzberg S.L."/>
            <person name="Hanson M."/>
            <person name="van Vugt R."/>
            <person name="Palmer N."/>
            <person name="Adams M.D."/>
            <person name="Gocayne J.D."/>
            <person name="Weidman J.F."/>
            <person name="Utterback T.R."/>
            <person name="Watthey L."/>
            <person name="McDonald L.A."/>
            <person name="Artiach P."/>
            <person name="Bowman C."/>
            <person name="Garland S.A."/>
            <person name="Fujii C."/>
            <person name="Cotton M.D."/>
            <person name="Horst K."/>
            <person name="Roberts K.M."/>
            <person name="Hatch B."/>
            <person name="Smith H.O."/>
            <person name="Venter J.C."/>
        </authorList>
    </citation>
    <scope>NUCLEOTIDE SEQUENCE [LARGE SCALE GENOMIC DNA]</scope>
    <source>
        <strain>ATCC 35210 / DSM 4680 / CIP 102532 / B31</strain>
    </source>
</reference>
<protein>
    <recommendedName>
        <fullName evidence="1">Translational regulator CsrA</fullName>
    </recommendedName>
</protein>